<accession>Q6F1X1</accession>
<keyword id="KW-0963">Cytoplasm</keyword>
<keyword id="KW-0396">Initiation factor</keyword>
<keyword id="KW-0648">Protein biosynthesis</keyword>
<keyword id="KW-1185">Reference proteome</keyword>
<keyword id="KW-0694">RNA-binding</keyword>
<keyword id="KW-0699">rRNA-binding</keyword>
<organism>
    <name type="scientific">Mesoplasma florum (strain ATCC 33453 / NBRC 100688 / NCTC 11704 / L1)</name>
    <name type="common">Acholeplasma florum</name>
    <dbReference type="NCBI Taxonomy" id="265311"/>
    <lineage>
        <taxon>Bacteria</taxon>
        <taxon>Bacillati</taxon>
        <taxon>Mycoplasmatota</taxon>
        <taxon>Mollicutes</taxon>
        <taxon>Entomoplasmatales</taxon>
        <taxon>Entomoplasmataceae</taxon>
        <taxon>Mesoplasma</taxon>
    </lineage>
</organism>
<evidence type="ECO:0000255" key="1">
    <source>
        <dbReference type="HAMAP-Rule" id="MF_00075"/>
    </source>
</evidence>
<protein>
    <recommendedName>
        <fullName evidence="1">Translation initiation factor IF-1</fullName>
    </recommendedName>
</protein>
<gene>
    <name evidence="1" type="primary">infA</name>
    <name type="ordered locus">Mfl146</name>
</gene>
<reference key="1">
    <citation type="submission" date="2004-06" db="EMBL/GenBank/DDBJ databases">
        <authorList>
            <person name="Birren B.W."/>
            <person name="Stange-Thomann N."/>
            <person name="Hafez N."/>
            <person name="DeCaprio D."/>
            <person name="Fisher S."/>
            <person name="Butler J."/>
            <person name="Elkins T."/>
            <person name="Kodira C.D."/>
            <person name="Major J."/>
            <person name="Wang S."/>
            <person name="Nicol R."/>
            <person name="Nusbaum C."/>
        </authorList>
    </citation>
    <scope>NUCLEOTIDE SEQUENCE [LARGE SCALE GENOMIC DNA]</scope>
    <source>
        <strain>ATCC 33453 / NBRC 100688 / NCTC 11704 / L1</strain>
    </source>
</reference>
<sequence>MAKEAEMEFEGTVVEVLPNAKFKVQLENDIVIDAHVSGKIRMHYIRILPGDKVTVVISPYDMTRGRITYRKIAKKAEV</sequence>
<proteinExistence type="inferred from homology"/>
<name>IF1_MESFL</name>
<dbReference type="EMBL" id="AE017263">
    <property type="protein sequence ID" value="AAT75502.1"/>
    <property type="molecule type" value="Genomic_DNA"/>
</dbReference>
<dbReference type="RefSeq" id="WP_011183043.1">
    <property type="nucleotide sequence ID" value="NC_006055.1"/>
</dbReference>
<dbReference type="RefSeq" id="YP_053386.1">
    <property type="nucleotide sequence ID" value="NC_006055.1"/>
</dbReference>
<dbReference type="SMR" id="Q6F1X1"/>
<dbReference type="STRING" id="265311.Mfl146"/>
<dbReference type="PaxDb" id="265311-Mfl146"/>
<dbReference type="EnsemblBacteria" id="AAT75502">
    <property type="protein sequence ID" value="AAT75502"/>
    <property type="gene ID" value="Mfl146"/>
</dbReference>
<dbReference type="GeneID" id="2897933"/>
<dbReference type="KEGG" id="mfl:Mfl146"/>
<dbReference type="PATRIC" id="fig|265311.5.peg.147"/>
<dbReference type="eggNOG" id="COG0361">
    <property type="taxonomic scope" value="Bacteria"/>
</dbReference>
<dbReference type="HOGENOM" id="CLU_151267_1_0_14"/>
<dbReference type="OrthoDB" id="9803250at2"/>
<dbReference type="Proteomes" id="UP000006647">
    <property type="component" value="Chromosome"/>
</dbReference>
<dbReference type="GO" id="GO:0005829">
    <property type="term" value="C:cytosol"/>
    <property type="evidence" value="ECO:0007669"/>
    <property type="project" value="TreeGrafter"/>
</dbReference>
<dbReference type="GO" id="GO:0043022">
    <property type="term" value="F:ribosome binding"/>
    <property type="evidence" value="ECO:0007669"/>
    <property type="project" value="UniProtKB-UniRule"/>
</dbReference>
<dbReference type="GO" id="GO:0019843">
    <property type="term" value="F:rRNA binding"/>
    <property type="evidence" value="ECO:0007669"/>
    <property type="project" value="UniProtKB-UniRule"/>
</dbReference>
<dbReference type="GO" id="GO:0003743">
    <property type="term" value="F:translation initiation factor activity"/>
    <property type="evidence" value="ECO:0007669"/>
    <property type="project" value="UniProtKB-UniRule"/>
</dbReference>
<dbReference type="CDD" id="cd04451">
    <property type="entry name" value="S1_IF1"/>
    <property type="match status" value="1"/>
</dbReference>
<dbReference type="FunFam" id="2.40.50.140:FF:000002">
    <property type="entry name" value="Translation initiation factor IF-1"/>
    <property type="match status" value="1"/>
</dbReference>
<dbReference type="Gene3D" id="2.40.50.140">
    <property type="entry name" value="Nucleic acid-binding proteins"/>
    <property type="match status" value="1"/>
</dbReference>
<dbReference type="HAMAP" id="MF_00075">
    <property type="entry name" value="IF_1"/>
    <property type="match status" value="1"/>
</dbReference>
<dbReference type="InterPro" id="IPR012340">
    <property type="entry name" value="NA-bd_OB-fold"/>
</dbReference>
<dbReference type="InterPro" id="IPR006196">
    <property type="entry name" value="RNA-binding_domain_S1_IF1"/>
</dbReference>
<dbReference type="InterPro" id="IPR003029">
    <property type="entry name" value="S1_domain"/>
</dbReference>
<dbReference type="InterPro" id="IPR004368">
    <property type="entry name" value="TIF_IF1"/>
</dbReference>
<dbReference type="NCBIfam" id="TIGR00008">
    <property type="entry name" value="infA"/>
    <property type="match status" value="1"/>
</dbReference>
<dbReference type="PANTHER" id="PTHR33370">
    <property type="entry name" value="TRANSLATION INITIATION FACTOR IF-1, CHLOROPLASTIC"/>
    <property type="match status" value="1"/>
</dbReference>
<dbReference type="PANTHER" id="PTHR33370:SF1">
    <property type="entry name" value="TRANSLATION INITIATION FACTOR IF-1, CHLOROPLASTIC"/>
    <property type="match status" value="1"/>
</dbReference>
<dbReference type="Pfam" id="PF01176">
    <property type="entry name" value="eIF-1a"/>
    <property type="match status" value="1"/>
</dbReference>
<dbReference type="SMART" id="SM00316">
    <property type="entry name" value="S1"/>
    <property type="match status" value="1"/>
</dbReference>
<dbReference type="SUPFAM" id="SSF50249">
    <property type="entry name" value="Nucleic acid-binding proteins"/>
    <property type="match status" value="1"/>
</dbReference>
<dbReference type="PROSITE" id="PS50832">
    <property type="entry name" value="S1_IF1_TYPE"/>
    <property type="match status" value="1"/>
</dbReference>
<comment type="function">
    <text evidence="1">One of the essential components for the initiation of protein synthesis. Stabilizes the binding of IF-2 and IF-3 on the 30S subunit to which N-formylmethionyl-tRNA(fMet) subsequently binds. Helps modulate mRNA selection, yielding the 30S pre-initiation complex (PIC). Upon addition of the 50S ribosomal subunit IF-1, IF-2 and IF-3 are released leaving the mature 70S translation initiation complex.</text>
</comment>
<comment type="subunit">
    <text evidence="1">Component of the 30S ribosomal translation pre-initiation complex which assembles on the 30S ribosome in the order IF-2 and IF-3, IF-1 and N-formylmethionyl-tRNA(fMet); mRNA recruitment can occur at any time during PIC assembly.</text>
</comment>
<comment type="subcellular location">
    <subcellularLocation>
        <location evidence="1">Cytoplasm</location>
    </subcellularLocation>
</comment>
<comment type="similarity">
    <text evidence="1">Belongs to the IF-1 family.</text>
</comment>
<feature type="chain" id="PRO_0000095817" description="Translation initiation factor IF-1">
    <location>
        <begin position="1"/>
        <end position="78"/>
    </location>
</feature>
<feature type="domain" description="S1-like" evidence="1">
    <location>
        <begin position="1"/>
        <end position="72"/>
    </location>
</feature>